<comment type="function">
    <text>This protein seems to be functional equivalent to rat prostatic spermine-binding protein, which is involved in polyamine binding.</text>
</comment>
<comment type="tissue specificity">
    <text>Prostate.</text>
</comment>
<comment type="induction">
    <text>By androgens.</text>
</comment>
<comment type="similarity">
    <text evidence="4">To rat SBP.</text>
</comment>
<keyword id="KW-0325">Glycoprotein</keyword>
<keyword id="KW-0430">Lectin</keyword>
<keyword id="KW-1185">Reference proteome</keyword>
<keyword id="KW-0732">Signal</keyword>
<gene>
    <name type="primary">Sbp</name>
</gene>
<name>SPBP_MOUSE</name>
<protein>
    <recommendedName>
        <fullName>Prostatic spermine-binding protein</fullName>
        <shortName>SBP</shortName>
    </recommendedName>
    <alternativeName>
        <fullName>Major prostatic secretory glycoprotein</fullName>
    </alternativeName>
    <alternativeName>
        <fullName>P25</fullName>
    </alternativeName>
</protein>
<accession>P15501</accession>
<sequence length="199" mass="21966">MLLLLTLAFLASPTCRAQNVLGNAAGKYFYVQGEDQGQLKGMRIFLSVFKFIKGFQLQFGSNWTDVYGTRSDNFIDFLLEDGEHVIKVEGSAVICLTSLTFTTNKGRVATFGVRRGRYFSDTGGSDKHLVTVNGMHAPGLCVRGIGFKWGNINANGNDHYNNKEDKADNKDADNKDADNKDDGDEDDDGNDDDDQKDES</sequence>
<evidence type="ECO:0000255" key="1"/>
<evidence type="ECO:0000255" key="2">
    <source>
        <dbReference type="PROSITE-ProRule" id="PRU01088"/>
    </source>
</evidence>
<evidence type="ECO:0000256" key="3">
    <source>
        <dbReference type="SAM" id="MobiDB-lite"/>
    </source>
</evidence>
<evidence type="ECO:0000305" key="4"/>
<reference key="1">
    <citation type="journal article" date="1987" name="Nucleic Acids Res.">
        <title>Androgen regulated expression of a spermine binding protein gene in mouse ventral prostate.</title>
        <authorList>
            <person name="Mills J.S."/>
            <person name="Needham M."/>
            <person name="Parker M.G."/>
        </authorList>
    </citation>
    <scope>NUCLEOTIDE SEQUENCE [GENOMIC DNA / MRNA]</scope>
    <source>
        <tissue>Prostate</tissue>
    </source>
</reference>
<reference key="2">
    <citation type="journal article" date="2004" name="Genome Res.">
        <title>The status, quality, and expansion of the NIH full-length cDNA project: the Mammalian Gene Collection (MGC).</title>
        <authorList>
            <consortium name="The MGC Project Team"/>
        </authorList>
    </citation>
    <scope>NUCLEOTIDE SEQUENCE [LARGE SCALE MRNA]</scope>
    <source>
        <tissue>Testis</tissue>
    </source>
</reference>
<organism>
    <name type="scientific">Mus musculus</name>
    <name type="common">Mouse</name>
    <dbReference type="NCBI Taxonomy" id="10090"/>
    <lineage>
        <taxon>Eukaryota</taxon>
        <taxon>Metazoa</taxon>
        <taxon>Chordata</taxon>
        <taxon>Craniata</taxon>
        <taxon>Vertebrata</taxon>
        <taxon>Euteleostomi</taxon>
        <taxon>Mammalia</taxon>
        <taxon>Eutheria</taxon>
        <taxon>Euarchontoglires</taxon>
        <taxon>Glires</taxon>
        <taxon>Rodentia</taxon>
        <taxon>Myomorpha</taxon>
        <taxon>Muroidea</taxon>
        <taxon>Muridae</taxon>
        <taxon>Murinae</taxon>
        <taxon>Mus</taxon>
        <taxon>Mus</taxon>
    </lineage>
</organism>
<proteinExistence type="evidence at transcript level"/>
<feature type="signal peptide">
    <location>
        <begin position="1"/>
        <end position="18"/>
    </location>
</feature>
<feature type="chain" id="PRO_0000022389" description="Prostatic spermine-binding protein">
    <location>
        <begin position="19"/>
        <end position="199"/>
    </location>
</feature>
<feature type="domain" description="Jacalin-type lectin" evidence="2">
    <location>
        <begin position="19"/>
        <end position="151"/>
    </location>
</feature>
<feature type="region of interest" description="Disordered" evidence="3">
    <location>
        <begin position="159"/>
        <end position="199"/>
    </location>
</feature>
<feature type="compositionally biased region" description="Basic and acidic residues" evidence="3">
    <location>
        <begin position="160"/>
        <end position="180"/>
    </location>
</feature>
<feature type="compositionally biased region" description="Acidic residues" evidence="3">
    <location>
        <begin position="181"/>
        <end position="199"/>
    </location>
</feature>
<feature type="glycosylation site" description="N-linked (GlcNAc...) asparagine" evidence="1">
    <location>
        <position position="62"/>
    </location>
</feature>
<dbReference type="EMBL" id="X06246">
    <property type="protein sequence ID" value="CAA29591.1"/>
    <property type="molecule type" value="mRNA"/>
</dbReference>
<dbReference type="EMBL" id="X06248">
    <property type="protein sequence ID" value="CAA29592.1"/>
    <property type="molecule type" value="Genomic_DNA"/>
</dbReference>
<dbReference type="EMBL" id="X06249">
    <property type="protein sequence ID" value="CAA29592.1"/>
    <property type="status" value="JOINED"/>
    <property type="molecule type" value="Genomic_DNA"/>
</dbReference>
<dbReference type="EMBL" id="X06250">
    <property type="protein sequence ID" value="CAA29592.1"/>
    <property type="status" value="JOINED"/>
    <property type="molecule type" value="Genomic_DNA"/>
</dbReference>
<dbReference type="EMBL" id="BC049605">
    <property type="protein sequence ID" value="AAH49605.1"/>
    <property type="molecule type" value="mRNA"/>
</dbReference>
<dbReference type="CCDS" id="CCDS57056.1"/>
<dbReference type="PIR" id="S01266">
    <property type="entry name" value="S01266"/>
</dbReference>
<dbReference type="RefSeq" id="NP_001371023.1">
    <property type="nucleotide sequence ID" value="NM_001384094.1"/>
</dbReference>
<dbReference type="RefSeq" id="NP_001371026.1">
    <property type="nucleotide sequence ID" value="NM_001384097.1"/>
</dbReference>
<dbReference type="RefSeq" id="NP_001371027.1">
    <property type="nucleotide sequence ID" value="NM_001384098.1"/>
</dbReference>
<dbReference type="RefSeq" id="NP_001371029.1">
    <property type="nucleotide sequence ID" value="NM_001384100.1"/>
</dbReference>
<dbReference type="RefSeq" id="NP_035451.1">
    <property type="nucleotide sequence ID" value="NM_011321.4"/>
</dbReference>
<dbReference type="SMR" id="P15501"/>
<dbReference type="FunCoup" id="P15501">
    <property type="interactions" value="177"/>
</dbReference>
<dbReference type="STRING" id="10090.ENSMUSP00000138219"/>
<dbReference type="GlyCosmos" id="P15501">
    <property type="glycosylation" value="1 site, No reported glycans"/>
</dbReference>
<dbReference type="GlyGen" id="P15501">
    <property type="glycosylation" value="1 site"/>
</dbReference>
<dbReference type="iPTMnet" id="P15501"/>
<dbReference type="PhosphoSitePlus" id="P15501"/>
<dbReference type="PaxDb" id="10090-ENSMUSP00000138219"/>
<dbReference type="ProteomicsDB" id="263314"/>
<dbReference type="DNASU" id="20234"/>
<dbReference type="Ensembl" id="ENSMUST00000024940.11">
    <property type="protein sequence ID" value="ENSMUSP00000024940.5"/>
    <property type="gene ID" value="ENSMUSG00000024128.14"/>
</dbReference>
<dbReference type="Ensembl" id="ENSMUST00000181985.8">
    <property type="protein sequence ID" value="ENSMUSP00000138422.2"/>
    <property type="gene ID" value="ENSMUSG00000024128.14"/>
</dbReference>
<dbReference type="Ensembl" id="ENSMUST00000183155.8">
    <property type="protein sequence ID" value="ENSMUSP00000138341.2"/>
    <property type="gene ID" value="ENSMUSG00000024128.14"/>
</dbReference>
<dbReference type="Ensembl" id="ENSMUST00000183252.8">
    <property type="protein sequence ID" value="ENSMUSP00000138219.2"/>
    <property type="gene ID" value="ENSMUSG00000024128.14"/>
</dbReference>
<dbReference type="GeneID" id="20234"/>
<dbReference type="KEGG" id="mmu:20234"/>
<dbReference type="UCSC" id="uc008auc.1">
    <property type="organism name" value="mouse"/>
</dbReference>
<dbReference type="AGR" id="MGI:106021"/>
<dbReference type="CTD" id="20234"/>
<dbReference type="MGI" id="MGI:106021">
    <property type="gene designation" value="Sbp"/>
</dbReference>
<dbReference type="VEuPathDB" id="HostDB:ENSMUSG00000024128"/>
<dbReference type="eggNOG" id="ENOG502SWMW">
    <property type="taxonomic scope" value="Eukaryota"/>
</dbReference>
<dbReference type="GeneTree" id="ENSGT00940000166063"/>
<dbReference type="InParanoid" id="P15501"/>
<dbReference type="OMA" id="TCRAQNI"/>
<dbReference type="OrthoDB" id="9606821at2759"/>
<dbReference type="PhylomeDB" id="P15501"/>
<dbReference type="TreeFam" id="TF333440"/>
<dbReference type="BioGRID-ORCS" id="20234">
    <property type="hits" value="11 hits in 75 CRISPR screens"/>
</dbReference>
<dbReference type="ChiTaRS" id="Sbp">
    <property type="organism name" value="mouse"/>
</dbReference>
<dbReference type="PRO" id="PR:P15501"/>
<dbReference type="Proteomes" id="UP000000589">
    <property type="component" value="Chromosome 17"/>
</dbReference>
<dbReference type="RNAct" id="P15501">
    <property type="molecule type" value="protein"/>
</dbReference>
<dbReference type="Bgee" id="ENSMUSG00000024128">
    <property type="expression patterns" value="Expressed in blastoderm cell in morula and 8 other cell types or tissues"/>
</dbReference>
<dbReference type="ExpressionAtlas" id="P15501">
    <property type="expression patterns" value="baseline and differential"/>
</dbReference>
<dbReference type="GO" id="GO:0005576">
    <property type="term" value="C:extracellular region"/>
    <property type="evidence" value="ECO:0000266"/>
    <property type="project" value="MGI"/>
</dbReference>
<dbReference type="GO" id="GO:0030246">
    <property type="term" value="F:carbohydrate binding"/>
    <property type="evidence" value="ECO:0007669"/>
    <property type="project" value="UniProtKB-KW"/>
</dbReference>
<dbReference type="CDD" id="cd09611">
    <property type="entry name" value="Jacalin_ZG16_like"/>
    <property type="match status" value="1"/>
</dbReference>
<dbReference type="FunFam" id="2.100.10.30:FF:000006">
    <property type="entry name" value="Prostatic spermine-binding protein"/>
    <property type="match status" value="1"/>
</dbReference>
<dbReference type="Gene3D" id="2.100.10.30">
    <property type="entry name" value="Jacalin-like lectin domain"/>
    <property type="match status" value="1"/>
</dbReference>
<dbReference type="InterPro" id="IPR001229">
    <property type="entry name" value="Jacalin-like_lectin_dom"/>
</dbReference>
<dbReference type="InterPro" id="IPR036404">
    <property type="entry name" value="Jacalin-like_lectin_dom_sf"/>
</dbReference>
<dbReference type="InterPro" id="IPR052321">
    <property type="entry name" value="PolyBind_ProtTraffic"/>
</dbReference>
<dbReference type="PANTHER" id="PTHR33589">
    <property type="entry name" value="OS11G0524900 PROTEIN"/>
    <property type="match status" value="1"/>
</dbReference>
<dbReference type="PANTHER" id="PTHR33589:SF1">
    <property type="entry name" value="ZYMOGEN GRANULE PROTEIN 16 HOMOLOG B"/>
    <property type="match status" value="1"/>
</dbReference>
<dbReference type="Pfam" id="PF01419">
    <property type="entry name" value="Jacalin"/>
    <property type="match status" value="1"/>
</dbReference>
<dbReference type="SMART" id="SM00915">
    <property type="entry name" value="Jacalin"/>
    <property type="match status" value="1"/>
</dbReference>
<dbReference type="SUPFAM" id="SSF51101">
    <property type="entry name" value="Mannose-binding lectins"/>
    <property type="match status" value="1"/>
</dbReference>
<dbReference type="PROSITE" id="PS51752">
    <property type="entry name" value="JACALIN_LECTIN"/>
    <property type="match status" value="1"/>
</dbReference>